<reference key="1">
    <citation type="journal article" date="2010" name="PLoS ONE">
        <title>Genome sequence of Cronobacter sakazakii BAA-894 and comparative genomic hybridization analysis with other Cronobacter species.</title>
        <authorList>
            <person name="Kucerova E."/>
            <person name="Clifton S.W."/>
            <person name="Xia X.Q."/>
            <person name="Long F."/>
            <person name="Porwollik S."/>
            <person name="Fulton L."/>
            <person name="Fronick C."/>
            <person name="Minx P."/>
            <person name="Kyung K."/>
            <person name="Warren W."/>
            <person name="Fulton R."/>
            <person name="Feng D."/>
            <person name="Wollam A."/>
            <person name="Shah N."/>
            <person name="Bhonagiri V."/>
            <person name="Nash W.E."/>
            <person name="Hallsworth-Pepin K."/>
            <person name="Wilson R.K."/>
            <person name="McClelland M."/>
            <person name="Forsythe S.J."/>
        </authorList>
    </citation>
    <scope>NUCLEOTIDE SEQUENCE [LARGE SCALE GENOMIC DNA]</scope>
    <source>
        <strain>ATCC BAA-894</strain>
    </source>
</reference>
<accession>A7MET6</accession>
<name>Y2427_CROS8</name>
<gene>
    <name type="ordered locus">ESA_02427</name>
</gene>
<dbReference type="EMBL" id="CP000783">
    <property type="protein sequence ID" value="ABU77673.1"/>
    <property type="molecule type" value="Genomic_DNA"/>
</dbReference>
<dbReference type="SMR" id="A7MET6"/>
<dbReference type="KEGG" id="esa:ESA_02427"/>
<dbReference type="HOGENOM" id="CLU_155659_3_1_6"/>
<dbReference type="Proteomes" id="UP000000260">
    <property type="component" value="Chromosome"/>
</dbReference>
<dbReference type="GO" id="GO:0005829">
    <property type="term" value="C:cytosol"/>
    <property type="evidence" value="ECO:0007669"/>
    <property type="project" value="TreeGrafter"/>
</dbReference>
<dbReference type="FunFam" id="2.20.25.10:FF:000002">
    <property type="entry name" value="UPF0434 protein YcaR"/>
    <property type="match status" value="1"/>
</dbReference>
<dbReference type="Gene3D" id="2.20.25.10">
    <property type="match status" value="1"/>
</dbReference>
<dbReference type="HAMAP" id="MF_01187">
    <property type="entry name" value="UPF0434"/>
    <property type="match status" value="1"/>
</dbReference>
<dbReference type="InterPro" id="IPR005651">
    <property type="entry name" value="Trm112-like"/>
</dbReference>
<dbReference type="NCBIfam" id="NF008806">
    <property type="entry name" value="PRK11827.1"/>
    <property type="match status" value="1"/>
</dbReference>
<dbReference type="PANTHER" id="PTHR33505:SF4">
    <property type="entry name" value="PROTEIN PREY, MITOCHONDRIAL"/>
    <property type="match status" value="1"/>
</dbReference>
<dbReference type="PANTHER" id="PTHR33505">
    <property type="entry name" value="ZGC:162634"/>
    <property type="match status" value="1"/>
</dbReference>
<dbReference type="Pfam" id="PF03966">
    <property type="entry name" value="Trm112p"/>
    <property type="match status" value="1"/>
</dbReference>
<dbReference type="SUPFAM" id="SSF158997">
    <property type="entry name" value="Trm112p-like"/>
    <property type="match status" value="1"/>
</dbReference>
<feature type="chain" id="PRO_1000065841" description="UPF0434 protein ESA_02427">
    <location>
        <begin position="1"/>
        <end position="60"/>
    </location>
</feature>
<evidence type="ECO:0000255" key="1">
    <source>
        <dbReference type="HAMAP-Rule" id="MF_01187"/>
    </source>
</evidence>
<organism>
    <name type="scientific">Cronobacter sakazakii (strain ATCC BAA-894)</name>
    <name type="common">Enterobacter sakazakii</name>
    <dbReference type="NCBI Taxonomy" id="290339"/>
    <lineage>
        <taxon>Bacteria</taxon>
        <taxon>Pseudomonadati</taxon>
        <taxon>Pseudomonadota</taxon>
        <taxon>Gammaproteobacteria</taxon>
        <taxon>Enterobacterales</taxon>
        <taxon>Enterobacteriaceae</taxon>
        <taxon>Cronobacter</taxon>
    </lineage>
</organism>
<proteinExistence type="inferred from homology"/>
<comment type="similarity">
    <text evidence="1">Belongs to the UPF0434 family.</text>
</comment>
<protein>
    <recommendedName>
        <fullName evidence="1">UPF0434 protein ESA_02427</fullName>
    </recommendedName>
</protein>
<sequence length="60" mass="6825">MDHRLLEIIACPVCNGKLYFNQEKQELICKADRLAFPLRDGIPVLLENEARALTAEETNP</sequence>
<keyword id="KW-1185">Reference proteome</keyword>